<feature type="chain" id="PRO_0000146698" description="Nucleoside-triphosphatase THEP1">
    <location>
        <begin position="1"/>
        <end position="174"/>
    </location>
</feature>
<feature type="binding site" evidence="1">
    <location>
        <begin position="7"/>
        <end position="14"/>
    </location>
    <ligand>
        <name>ATP</name>
        <dbReference type="ChEBI" id="CHEBI:30616"/>
    </ligand>
</feature>
<feature type="binding site" evidence="1">
    <location>
        <begin position="98"/>
        <end position="105"/>
    </location>
    <ligand>
        <name>ATP</name>
        <dbReference type="ChEBI" id="CHEBI:30616"/>
    </ligand>
</feature>
<keyword id="KW-0067">ATP-binding</keyword>
<keyword id="KW-0378">Hydrolase</keyword>
<keyword id="KW-0547">Nucleotide-binding</keyword>
<keyword id="KW-1185">Reference proteome</keyword>
<accession>O27140</accession>
<protein>
    <recommendedName>
        <fullName evidence="1">Nucleoside-triphosphatase THEP1</fullName>
        <shortName evidence="1">NTPase THEP1</shortName>
        <ecNumber evidence="1">3.6.1.15</ecNumber>
    </recommendedName>
    <alternativeName>
        <fullName evidence="1">Nucleoside triphosphate phosphohydrolase</fullName>
    </alternativeName>
</protein>
<reference key="1">
    <citation type="journal article" date="1997" name="J. Bacteriol.">
        <title>Complete genome sequence of Methanobacterium thermoautotrophicum deltaH: functional analysis and comparative genomics.</title>
        <authorList>
            <person name="Smith D.R."/>
            <person name="Doucette-Stamm L.A."/>
            <person name="Deloughery C."/>
            <person name="Lee H.-M."/>
            <person name="Dubois J."/>
            <person name="Aldredge T."/>
            <person name="Bashirzadeh R."/>
            <person name="Blakely D."/>
            <person name="Cook R."/>
            <person name="Gilbert K."/>
            <person name="Harrison D."/>
            <person name="Hoang L."/>
            <person name="Keagle P."/>
            <person name="Lumm W."/>
            <person name="Pothier B."/>
            <person name="Qiu D."/>
            <person name="Spadafora R."/>
            <person name="Vicare R."/>
            <person name="Wang Y."/>
            <person name="Wierzbowski J."/>
            <person name="Gibson R."/>
            <person name="Jiwani N."/>
            <person name="Caruso A."/>
            <person name="Bush D."/>
            <person name="Safer H."/>
            <person name="Patwell D."/>
            <person name="Prabhakar S."/>
            <person name="McDougall S."/>
            <person name="Shimer G."/>
            <person name="Goyal A."/>
            <person name="Pietrovski S."/>
            <person name="Church G.M."/>
            <person name="Daniels C.J."/>
            <person name="Mao J.-I."/>
            <person name="Rice P."/>
            <person name="Noelling J."/>
            <person name="Reeve J.N."/>
        </authorList>
    </citation>
    <scope>NUCLEOTIDE SEQUENCE [LARGE SCALE GENOMIC DNA]</scope>
    <source>
        <strain>ATCC 29096 / DSM 1053 / JCM 10044 / NBRC 100330 / Delta H</strain>
    </source>
</reference>
<sequence length="174" mass="19426">MKILITGRPGSGKSTMVGRLRDYLEGMGFSVGGIITPEVRVGGSRWGFEVVDIASGRRGLLASVETEGPRIGRYGVNVGVMDELAVPAIRRAMLEDDCIIIDEIGPMELKSREFRRTVDEVLSSDVLLIAAVHRKTLQSIKKREDIRVFVVDPEKRDRVYLRIIDLLGDYHGMR</sequence>
<comment type="function">
    <text evidence="1">Has nucleotide phosphatase activity towards ATP, GTP, CTP, TTP and UTP. May hydrolyze nucleoside diphosphates with lower efficiency.</text>
</comment>
<comment type="catalytic activity">
    <reaction evidence="1">
        <text>a ribonucleoside 5'-triphosphate + H2O = a ribonucleoside 5'-diphosphate + phosphate + H(+)</text>
        <dbReference type="Rhea" id="RHEA:23680"/>
        <dbReference type="ChEBI" id="CHEBI:15377"/>
        <dbReference type="ChEBI" id="CHEBI:15378"/>
        <dbReference type="ChEBI" id="CHEBI:43474"/>
        <dbReference type="ChEBI" id="CHEBI:57930"/>
        <dbReference type="ChEBI" id="CHEBI:61557"/>
        <dbReference type="EC" id="3.6.1.15"/>
    </reaction>
</comment>
<comment type="similarity">
    <text evidence="1">Belongs to the THEP1 NTPase family.</text>
</comment>
<organism>
    <name type="scientific">Methanothermobacter thermautotrophicus (strain ATCC 29096 / DSM 1053 / JCM 10044 / NBRC 100330 / Delta H)</name>
    <name type="common">Methanobacterium thermoautotrophicum</name>
    <dbReference type="NCBI Taxonomy" id="187420"/>
    <lineage>
        <taxon>Archaea</taxon>
        <taxon>Methanobacteriati</taxon>
        <taxon>Methanobacteriota</taxon>
        <taxon>Methanomada group</taxon>
        <taxon>Methanobacteria</taxon>
        <taxon>Methanobacteriales</taxon>
        <taxon>Methanobacteriaceae</taxon>
        <taxon>Methanothermobacter</taxon>
    </lineage>
</organism>
<name>NTPTH_METTH</name>
<proteinExistence type="inferred from homology"/>
<gene>
    <name type="ordered locus">MTH_1068</name>
</gene>
<evidence type="ECO:0000255" key="1">
    <source>
        <dbReference type="HAMAP-Rule" id="MF_00796"/>
    </source>
</evidence>
<dbReference type="EC" id="3.6.1.15" evidence="1"/>
<dbReference type="EMBL" id="AE000666">
    <property type="protein sequence ID" value="AAB85557.1"/>
    <property type="molecule type" value="Genomic_DNA"/>
</dbReference>
<dbReference type="PIR" id="G69008">
    <property type="entry name" value="G69008"/>
</dbReference>
<dbReference type="RefSeq" id="WP_010876692.1">
    <property type="nucleotide sequence ID" value="NC_000916.1"/>
</dbReference>
<dbReference type="SMR" id="O27140"/>
<dbReference type="FunCoup" id="O27140">
    <property type="interactions" value="85"/>
</dbReference>
<dbReference type="STRING" id="187420.MTH_1068"/>
<dbReference type="PaxDb" id="187420-MTH_1068"/>
<dbReference type="EnsemblBacteria" id="AAB85557">
    <property type="protein sequence ID" value="AAB85557"/>
    <property type="gene ID" value="MTH_1068"/>
</dbReference>
<dbReference type="GeneID" id="1471476"/>
<dbReference type="KEGG" id="mth:MTH_1068"/>
<dbReference type="PATRIC" id="fig|187420.15.peg.1045"/>
<dbReference type="HOGENOM" id="CLU_103145_1_1_2"/>
<dbReference type="InParanoid" id="O27140"/>
<dbReference type="Proteomes" id="UP000005223">
    <property type="component" value="Chromosome"/>
</dbReference>
<dbReference type="GO" id="GO:0005524">
    <property type="term" value="F:ATP binding"/>
    <property type="evidence" value="ECO:0007669"/>
    <property type="project" value="UniProtKB-UniRule"/>
</dbReference>
<dbReference type="GO" id="GO:0017111">
    <property type="term" value="F:ribonucleoside triphosphate phosphatase activity"/>
    <property type="evidence" value="ECO:0007669"/>
    <property type="project" value="UniProtKB-UniRule"/>
</dbReference>
<dbReference type="CDD" id="cd19482">
    <property type="entry name" value="RecA-like_Thep1"/>
    <property type="match status" value="1"/>
</dbReference>
<dbReference type="Gene3D" id="3.40.50.300">
    <property type="entry name" value="P-loop containing nucleotide triphosphate hydrolases"/>
    <property type="match status" value="1"/>
</dbReference>
<dbReference type="HAMAP" id="MF_00796">
    <property type="entry name" value="NTPase_1"/>
    <property type="match status" value="1"/>
</dbReference>
<dbReference type="InterPro" id="IPR004948">
    <property type="entry name" value="Nuc-triphosphatase_THEP1"/>
</dbReference>
<dbReference type="InterPro" id="IPR027417">
    <property type="entry name" value="P-loop_NTPase"/>
</dbReference>
<dbReference type="NCBIfam" id="NF010248">
    <property type="entry name" value="PRK13695.1"/>
    <property type="match status" value="1"/>
</dbReference>
<dbReference type="PANTHER" id="PTHR43146">
    <property type="entry name" value="CANCER-RELATED NUCLEOSIDE-TRIPHOSPHATASE"/>
    <property type="match status" value="1"/>
</dbReference>
<dbReference type="PANTHER" id="PTHR43146:SF1">
    <property type="entry name" value="CANCER-RELATED NUCLEOSIDE-TRIPHOSPHATASE"/>
    <property type="match status" value="1"/>
</dbReference>
<dbReference type="Pfam" id="PF03266">
    <property type="entry name" value="NTPase_1"/>
    <property type="match status" value="1"/>
</dbReference>
<dbReference type="SUPFAM" id="SSF52540">
    <property type="entry name" value="P-loop containing nucleoside triphosphate hydrolases"/>
    <property type="match status" value="1"/>
</dbReference>